<dbReference type="EMBL" id="AE004439">
    <property type="protein sequence ID" value="AAK03370.1"/>
    <property type="molecule type" value="Genomic_DNA"/>
</dbReference>
<dbReference type="RefSeq" id="WP_005717764.1">
    <property type="nucleotide sequence ID" value="NC_002663.1"/>
</dbReference>
<dbReference type="SMR" id="Q9CLE9"/>
<dbReference type="STRING" id="272843.PM1286"/>
<dbReference type="EnsemblBacteria" id="AAK03370">
    <property type="protein sequence ID" value="AAK03370"/>
    <property type="gene ID" value="PM1286"/>
</dbReference>
<dbReference type="GeneID" id="77206760"/>
<dbReference type="KEGG" id="pmu:PM1286"/>
<dbReference type="HOGENOM" id="CLU_049301_18_0_6"/>
<dbReference type="OrthoDB" id="9792500at2"/>
<dbReference type="Proteomes" id="UP000000809">
    <property type="component" value="Chromosome"/>
</dbReference>
<dbReference type="GO" id="GO:0005737">
    <property type="term" value="C:cytoplasm"/>
    <property type="evidence" value="ECO:0007669"/>
    <property type="project" value="UniProtKB-SubCell"/>
</dbReference>
<dbReference type="CDD" id="cd23657">
    <property type="entry name" value="USP-A-like"/>
    <property type="match status" value="1"/>
</dbReference>
<dbReference type="Gene3D" id="3.40.50.620">
    <property type="entry name" value="HUPs"/>
    <property type="match status" value="1"/>
</dbReference>
<dbReference type="InterPro" id="IPR014729">
    <property type="entry name" value="Rossmann-like_a/b/a_fold"/>
</dbReference>
<dbReference type="InterPro" id="IPR006015">
    <property type="entry name" value="Universal_stress_UspA"/>
</dbReference>
<dbReference type="InterPro" id="IPR006016">
    <property type="entry name" value="UspA"/>
</dbReference>
<dbReference type="NCBIfam" id="NF011698">
    <property type="entry name" value="PRK15118.1"/>
    <property type="match status" value="1"/>
</dbReference>
<dbReference type="PANTHER" id="PTHR46268">
    <property type="entry name" value="STRESS RESPONSE PROTEIN NHAX"/>
    <property type="match status" value="1"/>
</dbReference>
<dbReference type="PANTHER" id="PTHR46268:SF23">
    <property type="entry name" value="UNIVERSAL STRESS PROTEIN A-RELATED"/>
    <property type="match status" value="1"/>
</dbReference>
<dbReference type="Pfam" id="PF00582">
    <property type="entry name" value="Usp"/>
    <property type="match status" value="1"/>
</dbReference>
<dbReference type="PIRSF" id="PIRSF006276">
    <property type="entry name" value="UspA"/>
    <property type="match status" value="1"/>
</dbReference>
<dbReference type="SUPFAM" id="SSF52402">
    <property type="entry name" value="Adenine nucleotide alpha hydrolases-like"/>
    <property type="match status" value="1"/>
</dbReference>
<organism>
    <name type="scientific">Pasteurella multocida (strain Pm70)</name>
    <dbReference type="NCBI Taxonomy" id="272843"/>
    <lineage>
        <taxon>Bacteria</taxon>
        <taxon>Pseudomonadati</taxon>
        <taxon>Pseudomonadota</taxon>
        <taxon>Gammaproteobacteria</taxon>
        <taxon>Pasteurellales</taxon>
        <taxon>Pasteurellaceae</taxon>
        <taxon>Pasteurella</taxon>
    </lineage>
</organism>
<keyword id="KW-0963">Cytoplasm</keyword>
<keyword id="KW-1185">Reference proteome</keyword>
<proteinExistence type="inferred from homology"/>
<accession>Q9CLE9</accession>
<reference key="1">
    <citation type="journal article" date="2001" name="Proc. Natl. Acad. Sci. U.S.A.">
        <title>Complete genomic sequence of Pasteurella multocida Pm70.</title>
        <authorList>
            <person name="May B.J."/>
            <person name="Zhang Q."/>
            <person name="Li L.L."/>
            <person name="Paustian M.L."/>
            <person name="Whittam T.S."/>
            <person name="Kapur V."/>
        </authorList>
    </citation>
    <scope>NUCLEOTIDE SEQUENCE [LARGE SCALE GENOMIC DNA]</scope>
    <source>
        <strain>Pm70</strain>
    </source>
</reference>
<protein>
    <recommendedName>
        <fullName>Universal stress protein A homolog</fullName>
    </recommendedName>
</protein>
<gene>
    <name type="primary">uspA</name>
    <name type="ordered locus">PM1286</name>
</gene>
<sequence>MYKHVLVAVDLSDESQFLLEKAAGVARRNEAKLSIIHVDVNFSDLYTGLIDVNMASMQDRISTETQQSLVQLAENSSYPVAEKLSGSGDLGQVLADAIEKYDVDLLVTGHHQDFWSKLMSSTRQVMNNIAVDMLVVPLRDE</sequence>
<comment type="function">
    <text evidence="1">Required for resistance to DNA-damaging agents.</text>
</comment>
<comment type="subunit">
    <text evidence="1">Homodimer.</text>
</comment>
<comment type="subcellular location">
    <subcellularLocation>
        <location evidence="1">Cytoplasm</location>
    </subcellularLocation>
</comment>
<comment type="similarity">
    <text evidence="2">Belongs to the universal stress protein A family.</text>
</comment>
<name>USPA_PASMU</name>
<feature type="chain" id="PRO_0000147401" description="Universal stress protein A homolog">
    <location>
        <begin position="1"/>
        <end position="141"/>
    </location>
</feature>
<evidence type="ECO:0000250" key="1"/>
<evidence type="ECO:0000305" key="2"/>